<name>YIDD_STRT2</name>
<proteinExistence type="inferred from homology"/>
<sequence length="83" mass="9527">MMKKFLIALVKAYQRWISPLFPLSCRFCPTCSVYMIQAIEKHGLKGVLMGIARILRCHPLSETGDDPVPDYFSLKRKKTPLDN</sequence>
<comment type="function">
    <text evidence="1">Could be involved in insertion of integral membrane proteins into the membrane.</text>
</comment>
<comment type="subcellular location">
    <subcellularLocation>
        <location evidence="1">Cell membrane</location>
        <topology evidence="1">Peripheral membrane protein</topology>
        <orientation evidence="1">Cytoplasmic side</orientation>
    </subcellularLocation>
</comment>
<comment type="similarity">
    <text evidence="1">Belongs to the UPF0161 family.</text>
</comment>
<organism>
    <name type="scientific">Streptococcus thermophilus (strain ATCC BAA-250 / LMG 18311)</name>
    <dbReference type="NCBI Taxonomy" id="264199"/>
    <lineage>
        <taxon>Bacteria</taxon>
        <taxon>Bacillati</taxon>
        <taxon>Bacillota</taxon>
        <taxon>Bacilli</taxon>
        <taxon>Lactobacillales</taxon>
        <taxon>Streptococcaceae</taxon>
        <taxon>Streptococcus</taxon>
    </lineage>
</organism>
<evidence type="ECO:0000255" key="1">
    <source>
        <dbReference type="HAMAP-Rule" id="MF_00386"/>
    </source>
</evidence>
<reference key="1">
    <citation type="journal article" date="2004" name="Nat. Biotechnol.">
        <title>Complete sequence and comparative genome analysis of the dairy bacterium Streptococcus thermophilus.</title>
        <authorList>
            <person name="Bolotin A."/>
            <person name="Quinquis B."/>
            <person name="Renault P."/>
            <person name="Sorokin A."/>
            <person name="Ehrlich S.D."/>
            <person name="Kulakauskas S."/>
            <person name="Lapidus A."/>
            <person name="Goltsman E."/>
            <person name="Mazur M."/>
            <person name="Pusch G.D."/>
            <person name="Fonstein M."/>
            <person name="Overbeek R."/>
            <person name="Kyprides N."/>
            <person name="Purnelle B."/>
            <person name="Prozzi D."/>
            <person name="Ngui K."/>
            <person name="Masuy D."/>
            <person name="Hancy F."/>
            <person name="Burteau S."/>
            <person name="Boutry M."/>
            <person name="Delcour J."/>
            <person name="Goffeau A."/>
            <person name="Hols P."/>
        </authorList>
    </citation>
    <scope>NUCLEOTIDE SEQUENCE [LARGE SCALE GENOMIC DNA]</scope>
    <source>
        <strain>ATCC BAA-250 / LMG 18311</strain>
    </source>
</reference>
<gene>
    <name type="ordered locus">stu0263</name>
</gene>
<dbReference type="EMBL" id="CP000023">
    <property type="protein sequence ID" value="AAV59987.1"/>
    <property type="molecule type" value="Genomic_DNA"/>
</dbReference>
<dbReference type="STRING" id="264199.stu0263"/>
<dbReference type="KEGG" id="stl:stu0263"/>
<dbReference type="PATRIC" id="fig|264199.4.peg.270"/>
<dbReference type="eggNOG" id="COG0759">
    <property type="taxonomic scope" value="Bacteria"/>
</dbReference>
<dbReference type="HOGENOM" id="CLU_144811_5_2_9"/>
<dbReference type="Proteomes" id="UP000001170">
    <property type="component" value="Chromosome"/>
</dbReference>
<dbReference type="GO" id="GO:0005886">
    <property type="term" value="C:plasma membrane"/>
    <property type="evidence" value="ECO:0007669"/>
    <property type="project" value="UniProtKB-SubCell"/>
</dbReference>
<dbReference type="HAMAP" id="MF_00386">
    <property type="entry name" value="UPF0161_YidD"/>
    <property type="match status" value="1"/>
</dbReference>
<dbReference type="InterPro" id="IPR002696">
    <property type="entry name" value="Membr_insert_effic_factor_YidD"/>
</dbReference>
<dbReference type="NCBIfam" id="TIGR00278">
    <property type="entry name" value="membrane protein insertion efficiency factor YidD"/>
    <property type="match status" value="1"/>
</dbReference>
<dbReference type="PANTHER" id="PTHR33383">
    <property type="entry name" value="MEMBRANE PROTEIN INSERTION EFFICIENCY FACTOR-RELATED"/>
    <property type="match status" value="1"/>
</dbReference>
<dbReference type="PANTHER" id="PTHR33383:SF1">
    <property type="entry name" value="MEMBRANE PROTEIN INSERTION EFFICIENCY FACTOR-RELATED"/>
    <property type="match status" value="1"/>
</dbReference>
<dbReference type="Pfam" id="PF01809">
    <property type="entry name" value="YidD"/>
    <property type="match status" value="1"/>
</dbReference>
<dbReference type="SMART" id="SM01234">
    <property type="entry name" value="Haemolytic"/>
    <property type="match status" value="1"/>
</dbReference>
<accession>Q5M619</accession>
<feature type="chain" id="PRO_0000253182" description="Putative membrane protein insertion efficiency factor">
    <location>
        <begin position="1"/>
        <end position="83"/>
    </location>
</feature>
<protein>
    <recommendedName>
        <fullName evidence="1">Putative membrane protein insertion efficiency factor</fullName>
    </recommendedName>
</protein>
<keyword id="KW-1003">Cell membrane</keyword>
<keyword id="KW-0472">Membrane</keyword>
<keyword id="KW-1185">Reference proteome</keyword>